<sequence length="67" mass="7861">MQNPTQKVISFSEHKADIERIKKEIEEGWAIVKLVPNKDRFIGLLEKISDPKDETIYIPPRKKIIMN</sequence>
<name>Y158_RICPR</name>
<dbReference type="EMBL" id="AJ235270">
    <property type="protein sequence ID" value="CAA14626.1"/>
    <property type="molecule type" value="Genomic_DNA"/>
</dbReference>
<dbReference type="PIR" id="C71726">
    <property type="entry name" value="C71726"/>
</dbReference>
<dbReference type="RefSeq" id="NP_220549.1">
    <property type="nucleotide sequence ID" value="NC_000963.1"/>
</dbReference>
<dbReference type="RefSeq" id="WP_004595874.1">
    <property type="nucleotide sequence ID" value="NC_000963.1"/>
</dbReference>
<dbReference type="SMR" id="Q9ZE04"/>
<dbReference type="STRING" id="272947.gene:17555241"/>
<dbReference type="EnsemblBacteria" id="CAA14626">
    <property type="protein sequence ID" value="CAA14626"/>
    <property type="gene ID" value="CAA14626"/>
</dbReference>
<dbReference type="KEGG" id="rpr:RP158"/>
<dbReference type="PATRIC" id="fig|272947.5.peg.163"/>
<dbReference type="HOGENOM" id="CLU_2809701_0_0_5"/>
<dbReference type="OrthoDB" id="7160028at2"/>
<dbReference type="Proteomes" id="UP000002480">
    <property type="component" value="Chromosome"/>
</dbReference>
<dbReference type="InterPro" id="IPR024246">
    <property type="entry name" value="DUF2674"/>
</dbReference>
<dbReference type="Pfam" id="PF10879">
    <property type="entry name" value="DUF2674"/>
    <property type="match status" value="1"/>
</dbReference>
<proteinExistence type="predicted"/>
<protein>
    <recommendedName>
        <fullName>Uncharacterized protein RP158</fullName>
    </recommendedName>
</protein>
<reference key="1">
    <citation type="journal article" date="1998" name="Nature">
        <title>The genome sequence of Rickettsia prowazekii and the origin of mitochondria.</title>
        <authorList>
            <person name="Andersson S.G.E."/>
            <person name="Zomorodipour A."/>
            <person name="Andersson J.O."/>
            <person name="Sicheritz-Ponten T."/>
            <person name="Alsmark U.C.M."/>
            <person name="Podowski R.M."/>
            <person name="Naeslund A.K."/>
            <person name="Eriksson A.-S."/>
            <person name="Winkler H.H."/>
            <person name="Kurland C.G."/>
        </authorList>
    </citation>
    <scope>NUCLEOTIDE SEQUENCE [LARGE SCALE GENOMIC DNA]</scope>
    <source>
        <strain>Madrid E</strain>
    </source>
</reference>
<organism>
    <name type="scientific">Rickettsia prowazekii (strain Madrid E)</name>
    <dbReference type="NCBI Taxonomy" id="272947"/>
    <lineage>
        <taxon>Bacteria</taxon>
        <taxon>Pseudomonadati</taxon>
        <taxon>Pseudomonadota</taxon>
        <taxon>Alphaproteobacteria</taxon>
        <taxon>Rickettsiales</taxon>
        <taxon>Rickettsiaceae</taxon>
        <taxon>Rickettsieae</taxon>
        <taxon>Rickettsia</taxon>
        <taxon>typhus group</taxon>
    </lineage>
</organism>
<accession>Q9ZE04</accession>
<feature type="chain" id="PRO_0000101322" description="Uncharacterized protein RP158">
    <location>
        <begin position="1"/>
        <end position="67"/>
    </location>
</feature>
<keyword id="KW-1185">Reference proteome</keyword>
<gene>
    <name type="ordered locus">RP158</name>
</gene>